<protein>
    <recommendedName>
        <fullName>Tubulin beta-1 chain</fullName>
    </recommendedName>
    <alternativeName>
        <fullName>Beta-1-tubulin</fullName>
    </alternativeName>
</protein>
<evidence type="ECO:0000250" key="1">
    <source>
        <dbReference type="UniProtKB" id="P68363"/>
    </source>
</evidence>
<evidence type="ECO:0000250" key="2">
    <source>
        <dbReference type="UniProtKB" id="Q13509"/>
    </source>
</evidence>
<evidence type="ECO:0000256" key="3">
    <source>
        <dbReference type="SAM" id="MobiDB-lite"/>
    </source>
</evidence>
<evidence type="ECO:0000305" key="4"/>
<comment type="function">
    <text>Tubulin is the major constituent of microtubules, a cylinder consisting of laterally associated linear protofilaments composed of alpha- and beta-tubulin heterodimers. Microtubules grow by the addition of GTP-tubulin dimers to the microtubule end, where a stabilizing cap forms. Below the cap, tubulin dimers are in GDP-bound state, owing to GTPase activity of alpha-tubulin.</text>
</comment>
<comment type="cofactor">
    <cofactor evidence="1">
        <name>Mg(2+)</name>
        <dbReference type="ChEBI" id="CHEBI:18420"/>
    </cofactor>
</comment>
<comment type="subunit">
    <text>Dimer of alpha and beta chains. A typical microtubule is a hollow water-filled tube with an outer diameter of 25 nm and an inner diameter of 15 nM. Alpha-beta heterodimers associate head-to-tail to form protofilaments running lengthwise along the microtubule wall with the beta-tubulin subunit facing the microtubule plus end conferring a structural polarity. Microtubules usually have 13 protofilaments but different protofilament numbers can be found in some organisms and specialized cells.</text>
</comment>
<comment type="subcellular location">
    <subcellularLocation>
        <location>Cytoplasm</location>
        <location>Cytoskeleton</location>
    </subcellularLocation>
</comment>
<comment type="tissue specificity">
    <text>Found in areas of rapidly dividing tissues.</text>
</comment>
<comment type="similarity">
    <text evidence="4">Belongs to the tubulin family.</text>
</comment>
<keyword id="KW-0963">Cytoplasm</keyword>
<keyword id="KW-0206">Cytoskeleton</keyword>
<keyword id="KW-0342">GTP-binding</keyword>
<keyword id="KW-0460">Magnesium</keyword>
<keyword id="KW-0479">Metal-binding</keyword>
<keyword id="KW-0493">Microtubule</keyword>
<keyword id="KW-0547">Nucleotide-binding</keyword>
<keyword id="KW-1185">Reference proteome</keyword>
<reference key="1">
    <citation type="journal article" date="1990" name="Plant Mol. Biol.">
        <title>The beta-tubulin gene family in Zea mays: two differentially expressed beta-tubulin genes.</title>
        <authorList>
            <person name="Hussey P.J."/>
            <person name="Haas N."/>
            <person name="Hunsperger J."/>
            <person name="Larkin J."/>
            <person name="Snustad D.P."/>
            <person name="Silflow C.D."/>
        </authorList>
    </citation>
    <scope>NUCLEOTIDE SEQUENCE [GENOMIC DNA]</scope>
    <source>
        <strain>cv. Wisconsin 22</strain>
    </source>
</reference>
<dbReference type="EMBL" id="X52878">
    <property type="protein sequence ID" value="CAA37060.1"/>
    <property type="molecule type" value="Genomic_DNA"/>
</dbReference>
<dbReference type="PIR" id="S14701">
    <property type="entry name" value="S14701"/>
</dbReference>
<dbReference type="SMR" id="P18025"/>
<dbReference type="FunCoup" id="P18025">
    <property type="interactions" value="2418"/>
</dbReference>
<dbReference type="STRING" id="4577.P18025"/>
<dbReference type="PaxDb" id="4577-GRMZM2G164696_P01"/>
<dbReference type="ProMEX" id="P18025"/>
<dbReference type="MaizeGDB" id="24940"/>
<dbReference type="eggNOG" id="KOG1375">
    <property type="taxonomic scope" value="Eukaryota"/>
</dbReference>
<dbReference type="InParanoid" id="P18025"/>
<dbReference type="Proteomes" id="UP000007305">
    <property type="component" value="Unplaced"/>
</dbReference>
<dbReference type="ExpressionAtlas" id="P18025">
    <property type="expression patterns" value="baseline and differential"/>
</dbReference>
<dbReference type="GO" id="GO:0005737">
    <property type="term" value="C:cytoplasm"/>
    <property type="evidence" value="ECO:0000318"/>
    <property type="project" value="GO_Central"/>
</dbReference>
<dbReference type="GO" id="GO:0005874">
    <property type="term" value="C:microtubule"/>
    <property type="evidence" value="ECO:0000318"/>
    <property type="project" value="GO_Central"/>
</dbReference>
<dbReference type="GO" id="GO:0005525">
    <property type="term" value="F:GTP binding"/>
    <property type="evidence" value="ECO:0000318"/>
    <property type="project" value="GO_Central"/>
</dbReference>
<dbReference type="GO" id="GO:0003924">
    <property type="term" value="F:GTPase activity"/>
    <property type="evidence" value="ECO:0007669"/>
    <property type="project" value="InterPro"/>
</dbReference>
<dbReference type="GO" id="GO:0046872">
    <property type="term" value="F:metal ion binding"/>
    <property type="evidence" value="ECO:0007669"/>
    <property type="project" value="UniProtKB-KW"/>
</dbReference>
<dbReference type="GO" id="GO:0005200">
    <property type="term" value="F:structural constituent of cytoskeleton"/>
    <property type="evidence" value="ECO:0000318"/>
    <property type="project" value="GO_Central"/>
</dbReference>
<dbReference type="GO" id="GO:0000226">
    <property type="term" value="P:microtubule cytoskeleton organization"/>
    <property type="evidence" value="ECO:0000318"/>
    <property type="project" value="GO_Central"/>
</dbReference>
<dbReference type="GO" id="GO:0000278">
    <property type="term" value="P:mitotic cell cycle"/>
    <property type="evidence" value="ECO:0000318"/>
    <property type="project" value="GO_Central"/>
</dbReference>
<dbReference type="CDD" id="cd02187">
    <property type="entry name" value="beta_tubulin"/>
    <property type="match status" value="1"/>
</dbReference>
<dbReference type="FunFam" id="1.10.287.600:FF:000002">
    <property type="entry name" value="Tubulin beta chain"/>
    <property type="match status" value="1"/>
</dbReference>
<dbReference type="FunFam" id="3.30.1330.20:FF:000002">
    <property type="entry name" value="Tubulin beta chain"/>
    <property type="match status" value="1"/>
</dbReference>
<dbReference type="FunFam" id="3.40.50.1440:FF:000005">
    <property type="entry name" value="Tubulin beta chain"/>
    <property type="match status" value="1"/>
</dbReference>
<dbReference type="Gene3D" id="1.10.287.600">
    <property type="entry name" value="Helix hairpin bin"/>
    <property type="match status" value="1"/>
</dbReference>
<dbReference type="Gene3D" id="3.30.1330.20">
    <property type="entry name" value="Tubulin/FtsZ, C-terminal domain"/>
    <property type="match status" value="1"/>
</dbReference>
<dbReference type="Gene3D" id="3.40.50.1440">
    <property type="entry name" value="Tubulin/FtsZ, GTPase domain"/>
    <property type="match status" value="1"/>
</dbReference>
<dbReference type="InterPro" id="IPR013838">
    <property type="entry name" value="Beta-tubulin_BS"/>
</dbReference>
<dbReference type="InterPro" id="IPR002453">
    <property type="entry name" value="Beta_tubulin"/>
</dbReference>
<dbReference type="InterPro" id="IPR008280">
    <property type="entry name" value="Tub_FtsZ_C"/>
</dbReference>
<dbReference type="InterPro" id="IPR000217">
    <property type="entry name" value="Tubulin"/>
</dbReference>
<dbReference type="InterPro" id="IPR037103">
    <property type="entry name" value="Tubulin/FtsZ-like_C"/>
</dbReference>
<dbReference type="InterPro" id="IPR018316">
    <property type="entry name" value="Tubulin/FtsZ_2-layer-sand-dom"/>
</dbReference>
<dbReference type="InterPro" id="IPR036525">
    <property type="entry name" value="Tubulin/FtsZ_GTPase_sf"/>
</dbReference>
<dbReference type="InterPro" id="IPR023123">
    <property type="entry name" value="Tubulin_C"/>
</dbReference>
<dbReference type="InterPro" id="IPR003008">
    <property type="entry name" value="Tubulin_FtsZ_GTPase"/>
</dbReference>
<dbReference type="PANTHER" id="PTHR11588">
    <property type="entry name" value="TUBULIN"/>
    <property type="match status" value="1"/>
</dbReference>
<dbReference type="Pfam" id="PF00091">
    <property type="entry name" value="Tubulin"/>
    <property type="match status" value="1"/>
</dbReference>
<dbReference type="Pfam" id="PF03953">
    <property type="entry name" value="Tubulin_C"/>
    <property type="match status" value="1"/>
</dbReference>
<dbReference type="PRINTS" id="PR01163">
    <property type="entry name" value="BETATUBULIN"/>
</dbReference>
<dbReference type="PRINTS" id="PR01161">
    <property type="entry name" value="TUBULIN"/>
</dbReference>
<dbReference type="SMART" id="SM00864">
    <property type="entry name" value="Tubulin"/>
    <property type="match status" value="1"/>
</dbReference>
<dbReference type="SMART" id="SM00865">
    <property type="entry name" value="Tubulin_C"/>
    <property type="match status" value="1"/>
</dbReference>
<dbReference type="SUPFAM" id="SSF55307">
    <property type="entry name" value="Tubulin C-terminal domain-like"/>
    <property type="match status" value="1"/>
</dbReference>
<dbReference type="SUPFAM" id="SSF52490">
    <property type="entry name" value="Tubulin nucleotide-binding domain-like"/>
    <property type="match status" value="1"/>
</dbReference>
<dbReference type="PROSITE" id="PS00228">
    <property type="entry name" value="TUBULIN_B_AUTOREG"/>
    <property type="match status" value="1"/>
</dbReference>
<gene>
    <name type="primary">TUBB1</name>
    <name type="synonym">TUB1</name>
</gene>
<proteinExistence type="evidence at transcript level"/>
<name>TBB1_MAIZE</name>
<accession>P18025</accession>
<feature type="chain" id="PRO_0000048355" description="Tubulin beta-1 chain">
    <location>
        <begin position="1"/>
        <end position="446"/>
    </location>
</feature>
<feature type="region of interest" description="Disordered" evidence="3">
    <location>
        <begin position="422"/>
        <end position="446"/>
    </location>
</feature>
<feature type="compositionally biased region" description="Acidic residues" evidence="3">
    <location>
        <begin position="429"/>
        <end position="446"/>
    </location>
</feature>
<feature type="binding site" evidence="2">
    <location>
        <position position="11"/>
    </location>
    <ligand>
        <name>GTP</name>
        <dbReference type="ChEBI" id="CHEBI:37565"/>
    </ligand>
</feature>
<feature type="binding site" evidence="1">
    <location>
        <position position="69"/>
    </location>
    <ligand>
        <name>GTP</name>
        <dbReference type="ChEBI" id="CHEBI:37565"/>
    </ligand>
</feature>
<feature type="binding site" evidence="1">
    <location>
        <position position="69"/>
    </location>
    <ligand>
        <name>Mg(2+)</name>
        <dbReference type="ChEBI" id="CHEBI:18420"/>
    </ligand>
</feature>
<feature type="binding site" evidence="2">
    <location>
        <position position="138"/>
    </location>
    <ligand>
        <name>GTP</name>
        <dbReference type="ChEBI" id="CHEBI:37565"/>
    </ligand>
</feature>
<feature type="binding site" evidence="2">
    <location>
        <position position="142"/>
    </location>
    <ligand>
        <name>GTP</name>
        <dbReference type="ChEBI" id="CHEBI:37565"/>
    </ligand>
</feature>
<feature type="binding site" evidence="2">
    <location>
        <position position="143"/>
    </location>
    <ligand>
        <name>GTP</name>
        <dbReference type="ChEBI" id="CHEBI:37565"/>
    </ligand>
</feature>
<feature type="binding site" evidence="2">
    <location>
        <position position="144"/>
    </location>
    <ligand>
        <name>GTP</name>
        <dbReference type="ChEBI" id="CHEBI:37565"/>
    </ligand>
</feature>
<feature type="binding site" evidence="2">
    <location>
        <position position="204"/>
    </location>
    <ligand>
        <name>GTP</name>
        <dbReference type="ChEBI" id="CHEBI:37565"/>
    </ligand>
</feature>
<feature type="binding site" evidence="2">
    <location>
        <position position="226"/>
    </location>
    <ligand>
        <name>GTP</name>
        <dbReference type="ChEBI" id="CHEBI:37565"/>
    </ligand>
</feature>
<sequence length="446" mass="49962">MREILHIQGGQCGNQIGAKFWEVVCAEHGIDATGRYGGDSDLQLERVNVYYNEASCGRFVPRAVLMDLEPGTMDSVRSGPYGHIFRPDNFVFGQSGAGNNSAKGHYTEGAELIDSVLDVVRKEAENCDCLQGFQVCHSLGGGTGSAMGTLLISKIREEYPDRMMLTFSVFPSPKVSDTVVEPYNATLSVHQLVENADECMVLDNEALYDICFRTLKLTTPSFGDLNHLISATMSGVTCCLRFPGQLNSDLRKLAVNLIPFPRLHFFMVGFAPLTSRGSQQYRALTVPELTQQMWDAKNMMCAADPRHGRYLTASAMFRGKMSTKEVDEQMLNVQNKNSSYFVEWIPNNVKSTVCDIPPHGLKMASTFIGNSTSIQEMFRRVSEQFTAMFRRKAFLHWYTGEGMDEMEFTEAESNMNDLVSEYQQYQDATADEEGEYEDEEEGDLQD</sequence>
<organism>
    <name type="scientific">Zea mays</name>
    <name type="common">Maize</name>
    <dbReference type="NCBI Taxonomy" id="4577"/>
    <lineage>
        <taxon>Eukaryota</taxon>
        <taxon>Viridiplantae</taxon>
        <taxon>Streptophyta</taxon>
        <taxon>Embryophyta</taxon>
        <taxon>Tracheophyta</taxon>
        <taxon>Spermatophyta</taxon>
        <taxon>Magnoliopsida</taxon>
        <taxon>Liliopsida</taxon>
        <taxon>Poales</taxon>
        <taxon>Poaceae</taxon>
        <taxon>PACMAD clade</taxon>
        <taxon>Panicoideae</taxon>
        <taxon>Andropogonodae</taxon>
        <taxon>Andropogoneae</taxon>
        <taxon>Tripsacinae</taxon>
        <taxon>Zea</taxon>
    </lineage>
</organism>